<gene>
    <name evidence="1" type="primary">coq7</name>
    <name type="ordered locus">ABO_2020</name>
</gene>
<organism>
    <name type="scientific">Alcanivorax borkumensis (strain ATCC 700651 / DSM 11573 / NCIMB 13689 / SK2)</name>
    <dbReference type="NCBI Taxonomy" id="393595"/>
    <lineage>
        <taxon>Bacteria</taxon>
        <taxon>Pseudomonadati</taxon>
        <taxon>Pseudomonadota</taxon>
        <taxon>Gammaproteobacteria</taxon>
        <taxon>Oceanospirillales</taxon>
        <taxon>Alcanivoracaceae</taxon>
        <taxon>Alcanivorax</taxon>
    </lineage>
</organism>
<proteinExistence type="inferred from homology"/>
<evidence type="ECO:0000255" key="1">
    <source>
        <dbReference type="HAMAP-Rule" id="MF_01658"/>
    </source>
</evidence>
<evidence type="ECO:0000256" key="2">
    <source>
        <dbReference type="SAM" id="MobiDB-lite"/>
    </source>
</evidence>
<keyword id="KW-1003">Cell membrane</keyword>
<keyword id="KW-0408">Iron</keyword>
<keyword id="KW-0472">Membrane</keyword>
<keyword id="KW-0479">Metal-binding</keyword>
<keyword id="KW-0503">Monooxygenase</keyword>
<keyword id="KW-0560">Oxidoreductase</keyword>
<keyword id="KW-1185">Reference proteome</keyword>
<keyword id="KW-0831">Ubiquinone biosynthesis</keyword>
<comment type="function">
    <text evidence="1">Catalyzes the hydroxylation of 2-nonaprenyl-3-methyl-6-methoxy-1,4-benzoquinol during ubiquinone biosynthesis.</text>
</comment>
<comment type="catalytic activity">
    <reaction evidence="1">
        <text>a 5-methoxy-2-methyl-3-(all-trans-polyprenyl)benzene-1,4-diol + AH2 + O2 = a 3-demethylubiquinol + A + H2O</text>
        <dbReference type="Rhea" id="RHEA:50908"/>
        <dbReference type="Rhea" id="RHEA-COMP:10859"/>
        <dbReference type="Rhea" id="RHEA-COMP:10914"/>
        <dbReference type="ChEBI" id="CHEBI:13193"/>
        <dbReference type="ChEBI" id="CHEBI:15377"/>
        <dbReference type="ChEBI" id="CHEBI:15379"/>
        <dbReference type="ChEBI" id="CHEBI:17499"/>
        <dbReference type="ChEBI" id="CHEBI:84167"/>
        <dbReference type="ChEBI" id="CHEBI:84422"/>
        <dbReference type="EC" id="1.14.99.60"/>
    </reaction>
</comment>
<comment type="cofactor">
    <cofactor evidence="1">
        <name>Fe cation</name>
        <dbReference type="ChEBI" id="CHEBI:24875"/>
    </cofactor>
    <text evidence="1">Binds 2 iron ions per subunit.</text>
</comment>
<comment type="pathway">
    <text evidence="1">Cofactor biosynthesis; ubiquinone biosynthesis.</text>
</comment>
<comment type="subcellular location">
    <subcellularLocation>
        <location evidence="1">Cell membrane</location>
        <topology evidence="1">Peripheral membrane protein</topology>
    </subcellularLocation>
</comment>
<comment type="similarity">
    <text evidence="1">Belongs to the COQ7 family.</text>
</comment>
<protein>
    <recommendedName>
        <fullName evidence="1">3-demethoxyubiquinol 3-hydroxylase</fullName>
        <shortName evidence="1">DMQ hydroxylase</shortName>
        <ecNumber evidence="1">1.14.99.60</ecNumber>
    </recommendedName>
    <alternativeName>
        <fullName evidence="1">2-nonaprenyl-3-methyl-6-methoxy-1,4-benzoquinol hydroxylase</fullName>
    </alternativeName>
</protein>
<sequence length="219" mass="24130">MTERRLSPLDKLLARADNALRTLTPGTTQAERTPAHAAPAPDAPEAGTLPSDQRRHVLGLMRINHTGEVCAQALYQGQASTASLPHIRHAMEESAREEEDHLAWCEERIQELGGVPSKLNPLFYAMSYAVGATAGLIGDRWSLGFVTETENQVVKHLESHLYQVPESDLRTRAILEQMKTDELKHAVTAKDAGGADLPSPVRHAMTLMSKVMTFTTYRI</sequence>
<reference key="1">
    <citation type="journal article" date="2006" name="Nat. Biotechnol.">
        <title>Genome sequence of the ubiquitous hydrocarbon-degrading marine bacterium Alcanivorax borkumensis.</title>
        <authorList>
            <person name="Schneiker S."/>
            <person name="Martins dos Santos V.A.P."/>
            <person name="Bartels D."/>
            <person name="Bekel T."/>
            <person name="Brecht M."/>
            <person name="Buhrmester J."/>
            <person name="Chernikova T.N."/>
            <person name="Denaro R."/>
            <person name="Ferrer M."/>
            <person name="Gertler C."/>
            <person name="Goesmann A."/>
            <person name="Golyshina O.V."/>
            <person name="Kaminski F."/>
            <person name="Khachane A.N."/>
            <person name="Lang S."/>
            <person name="Linke B."/>
            <person name="McHardy A.C."/>
            <person name="Meyer F."/>
            <person name="Nechitaylo T."/>
            <person name="Puehler A."/>
            <person name="Regenhardt D."/>
            <person name="Rupp O."/>
            <person name="Sabirova J.S."/>
            <person name="Selbitschka W."/>
            <person name="Yakimov M.M."/>
            <person name="Timmis K.N."/>
            <person name="Vorhoelter F.-J."/>
            <person name="Weidner S."/>
            <person name="Kaiser O."/>
            <person name="Golyshin P.N."/>
        </authorList>
    </citation>
    <scope>NUCLEOTIDE SEQUENCE [LARGE SCALE GENOMIC DNA]</scope>
    <source>
        <strain>ATCC 700651 / DSM 11573 / NCIMB 13689 / SK2</strain>
    </source>
</reference>
<accession>Q0VMY0</accession>
<feature type="chain" id="PRO_0000338654" description="3-demethoxyubiquinol 3-hydroxylase">
    <location>
        <begin position="1"/>
        <end position="219"/>
    </location>
</feature>
<feature type="region of interest" description="Disordered" evidence="2">
    <location>
        <begin position="21"/>
        <end position="51"/>
    </location>
</feature>
<feature type="compositionally biased region" description="Low complexity" evidence="2">
    <location>
        <begin position="35"/>
        <end position="46"/>
    </location>
</feature>
<feature type="binding site" evidence="1">
    <location>
        <position position="68"/>
    </location>
    <ligand>
        <name>Fe cation</name>
        <dbReference type="ChEBI" id="CHEBI:24875"/>
        <label>1</label>
    </ligand>
</feature>
<feature type="binding site" evidence="1">
    <location>
        <position position="98"/>
    </location>
    <ligand>
        <name>Fe cation</name>
        <dbReference type="ChEBI" id="CHEBI:24875"/>
        <label>1</label>
    </ligand>
</feature>
<feature type="binding site" evidence="1">
    <location>
        <position position="98"/>
    </location>
    <ligand>
        <name>Fe cation</name>
        <dbReference type="ChEBI" id="CHEBI:24875"/>
        <label>2</label>
    </ligand>
</feature>
<feature type="binding site" evidence="1">
    <location>
        <position position="101"/>
    </location>
    <ligand>
        <name>Fe cation</name>
        <dbReference type="ChEBI" id="CHEBI:24875"/>
        <label>1</label>
    </ligand>
</feature>
<feature type="binding site" evidence="1">
    <location>
        <position position="150"/>
    </location>
    <ligand>
        <name>Fe cation</name>
        <dbReference type="ChEBI" id="CHEBI:24875"/>
        <label>2</label>
    </ligand>
</feature>
<feature type="binding site" evidence="1">
    <location>
        <position position="182"/>
    </location>
    <ligand>
        <name>Fe cation</name>
        <dbReference type="ChEBI" id="CHEBI:24875"/>
        <label>1</label>
    </ligand>
</feature>
<feature type="binding site" evidence="1">
    <location>
        <position position="182"/>
    </location>
    <ligand>
        <name>Fe cation</name>
        <dbReference type="ChEBI" id="CHEBI:24875"/>
        <label>2</label>
    </ligand>
</feature>
<feature type="binding site" evidence="1">
    <location>
        <position position="185"/>
    </location>
    <ligand>
        <name>Fe cation</name>
        <dbReference type="ChEBI" id="CHEBI:24875"/>
        <label>2</label>
    </ligand>
</feature>
<name>COQ7_ALCBS</name>
<dbReference type="EC" id="1.14.99.60" evidence="1"/>
<dbReference type="EMBL" id="AM286690">
    <property type="protein sequence ID" value="CAL17468.1"/>
    <property type="molecule type" value="Genomic_DNA"/>
</dbReference>
<dbReference type="RefSeq" id="WP_011589299.1">
    <property type="nucleotide sequence ID" value="NC_008260.1"/>
</dbReference>
<dbReference type="SMR" id="Q0VMY0"/>
<dbReference type="STRING" id="393595.ABO_2020"/>
<dbReference type="KEGG" id="abo:ABO_2020"/>
<dbReference type="eggNOG" id="COG2941">
    <property type="taxonomic scope" value="Bacteria"/>
</dbReference>
<dbReference type="HOGENOM" id="CLU_088601_0_0_6"/>
<dbReference type="OrthoDB" id="5192789at2"/>
<dbReference type="UniPathway" id="UPA00232"/>
<dbReference type="Proteomes" id="UP000008871">
    <property type="component" value="Chromosome"/>
</dbReference>
<dbReference type="GO" id="GO:0005886">
    <property type="term" value="C:plasma membrane"/>
    <property type="evidence" value="ECO:0007669"/>
    <property type="project" value="UniProtKB-SubCell"/>
</dbReference>
<dbReference type="GO" id="GO:0008682">
    <property type="term" value="F:3-demethoxyubiquinol 3-hydroxylase activity"/>
    <property type="evidence" value="ECO:0007669"/>
    <property type="project" value="UniProtKB-EC"/>
</dbReference>
<dbReference type="GO" id="GO:0046872">
    <property type="term" value="F:metal ion binding"/>
    <property type="evidence" value="ECO:0007669"/>
    <property type="project" value="UniProtKB-KW"/>
</dbReference>
<dbReference type="GO" id="GO:0006744">
    <property type="term" value="P:ubiquinone biosynthetic process"/>
    <property type="evidence" value="ECO:0007669"/>
    <property type="project" value="UniProtKB-UniRule"/>
</dbReference>
<dbReference type="CDD" id="cd01042">
    <property type="entry name" value="DMQH"/>
    <property type="match status" value="1"/>
</dbReference>
<dbReference type="Gene3D" id="1.20.1260.10">
    <property type="match status" value="1"/>
</dbReference>
<dbReference type="HAMAP" id="MF_01658">
    <property type="entry name" value="COQ7"/>
    <property type="match status" value="1"/>
</dbReference>
<dbReference type="InterPro" id="IPR047809">
    <property type="entry name" value="COQ7_proteobact"/>
</dbReference>
<dbReference type="InterPro" id="IPR012347">
    <property type="entry name" value="Ferritin-like"/>
</dbReference>
<dbReference type="InterPro" id="IPR009078">
    <property type="entry name" value="Ferritin-like_SF"/>
</dbReference>
<dbReference type="InterPro" id="IPR011566">
    <property type="entry name" value="Ubq_synth_Coq7"/>
</dbReference>
<dbReference type="NCBIfam" id="NF033656">
    <property type="entry name" value="DMQ_monoox_COQ7"/>
    <property type="match status" value="1"/>
</dbReference>
<dbReference type="PANTHER" id="PTHR11237:SF4">
    <property type="entry name" value="5-DEMETHOXYUBIQUINONE HYDROXYLASE, MITOCHONDRIAL"/>
    <property type="match status" value="1"/>
</dbReference>
<dbReference type="PANTHER" id="PTHR11237">
    <property type="entry name" value="COENZYME Q10 BIOSYNTHESIS PROTEIN 7"/>
    <property type="match status" value="1"/>
</dbReference>
<dbReference type="Pfam" id="PF03232">
    <property type="entry name" value="COQ7"/>
    <property type="match status" value="1"/>
</dbReference>
<dbReference type="SUPFAM" id="SSF47240">
    <property type="entry name" value="Ferritin-like"/>
    <property type="match status" value="1"/>
</dbReference>